<reference key="1">
    <citation type="journal article" date="2000" name="Nature">
        <title>Sequence and analysis of chromosome 1 of the plant Arabidopsis thaliana.</title>
        <authorList>
            <person name="Theologis A."/>
            <person name="Ecker J.R."/>
            <person name="Palm C.J."/>
            <person name="Federspiel N.A."/>
            <person name="Kaul S."/>
            <person name="White O."/>
            <person name="Alonso J."/>
            <person name="Altafi H."/>
            <person name="Araujo R."/>
            <person name="Bowman C.L."/>
            <person name="Brooks S.Y."/>
            <person name="Buehler E."/>
            <person name="Chan A."/>
            <person name="Chao Q."/>
            <person name="Chen H."/>
            <person name="Cheuk R.F."/>
            <person name="Chin C.W."/>
            <person name="Chung M.K."/>
            <person name="Conn L."/>
            <person name="Conway A.B."/>
            <person name="Conway A.R."/>
            <person name="Creasy T.H."/>
            <person name="Dewar K."/>
            <person name="Dunn P."/>
            <person name="Etgu P."/>
            <person name="Feldblyum T.V."/>
            <person name="Feng J.-D."/>
            <person name="Fong B."/>
            <person name="Fujii C.Y."/>
            <person name="Gill J.E."/>
            <person name="Goldsmith A.D."/>
            <person name="Haas B."/>
            <person name="Hansen N.F."/>
            <person name="Hughes B."/>
            <person name="Huizar L."/>
            <person name="Hunter J.L."/>
            <person name="Jenkins J."/>
            <person name="Johnson-Hopson C."/>
            <person name="Khan S."/>
            <person name="Khaykin E."/>
            <person name="Kim C.J."/>
            <person name="Koo H.L."/>
            <person name="Kremenetskaia I."/>
            <person name="Kurtz D.B."/>
            <person name="Kwan A."/>
            <person name="Lam B."/>
            <person name="Langin-Hooper S."/>
            <person name="Lee A."/>
            <person name="Lee J.M."/>
            <person name="Lenz C.A."/>
            <person name="Li J.H."/>
            <person name="Li Y.-P."/>
            <person name="Lin X."/>
            <person name="Liu S.X."/>
            <person name="Liu Z.A."/>
            <person name="Luros J.S."/>
            <person name="Maiti R."/>
            <person name="Marziali A."/>
            <person name="Militscher J."/>
            <person name="Miranda M."/>
            <person name="Nguyen M."/>
            <person name="Nierman W.C."/>
            <person name="Osborne B.I."/>
            <person name="Pai G."/>
            <person name="Peterson J."/>
            <person name="Pham P.K."/>
            <person name="Rizzo M."/>
            <person name="Rooney T."/>
            <person name="Rowley D."/>
            <person name="Sakano H."/>
            <person name="Salzberg S.L."/>
            <person name="Schwartz J.R."/>
            <person name="Shinn P."/>
            <person name="Southwick A.M."/>
            <person name="Sun H."/>
            <person name="Tallon L.J."/>
            <person name="Tambunga G."/>
            <person name="Toriumi M.J."/>
            <person name="Town C.D."/>
            <person name="Utterback T."/>
            <person name="Van Aken S."/>
            <person name="Vaysberg M."/>
            <person name="Vysotskaia V.S."/>
            <person name="Walker M."/>
            <person name="Wu D."/>
            <person name="Yu G."/>
            <person name="Fraser C.M."/>
            <person name="Venter J.C."/>
            <person name="Davis R.W."/>
        </authorList>
    </citation>
    <scope>NUCLEOTIDE SEQUENCE [LARGE SCALE GENOMIC DNA]</scope>
    <source>
        <strain>cv. Columbia</strain>
    </source>
</reference>
<reference key="2">
    <citation type="journal article" date="2017" name="Plant J.">
        <title>Araport11: a complete reannotation of the Arabidopsis thaliana reference genome.</title>
        <authorList>
            <person name="Cheng C.Y."/>
            <person name="Krishnakumar V."/>
            <person name="Chan A.P."/>
            <person name="Thibaud-Nissen F."/>
            <person name="Schobel S."/>
            <person name="Town C.D."/>
        </authorList>
    </citation>
    <scope>GENOME REANNOTATION</scope>
    <source>
        <strain>cv. Columbia</strain>
    </source>
</reference>
<sequence length="230" mass="25843">MQIFLKTLTGKTKVLEVESSDTIDNVKAKIQDIEGIPPDQHRLIFAGKQLEDGRTLADYNVQEDSTLHLLLRFRGGMQIFVKTLTGKTITLEVESSDTIDNLKAKIQDKEGIPPDQQRLIFAGKQLEDGRTLADYNIQKESTLHLVLRLRGGMQIFVKTLTGKTITLEVESSDTIDNVKAKIQDKEGISPDQQRLIFAGKQHEDGRTLADYNIQKESTLHLVLRLRGGSF</sequence>
<keyword id="KW-0963">Cytoplasm</keyword>
<keyword id="KW-1017">Isopeptide bond</keyword>
<keyword id="KW-0539">Nucleus</keyword>
<keyword id="KW-1185">Reference proteome</keyword>
<keyword id="KW-0677">Repeat</keyword>
<keyword id="KW-0833">Ubl conjugation pathway</keyword>
<accession>Q3E7K8</accession>
<comment type="function">
    <text evidence="1">Ubiquitin exists either covalently attached to another protein, or free (unanchored). When covalently bound, it is conjugated to target proteins via an isopeptide bond either as a monomer (monoubiquitin), a polymer linked via different Lys residues of the ubiquitin (polyubiquitin chains) or a linear polymer linked via the initiator Met of the ubiquitin (linear polyubiquitin chains). Polyubiquitin chains, when attached to a target protein, have different functions depending on the Lys residue of the ubiquitin that is linked: Lys-11-linked is involved in ERAD (endoplasmic reticulum-associated degradation) and in cell-cycle regulation; Lys-29-linked is involved in lysosomal degradation; Lys-33-linked is involved in kinase modification; Lys-48-linked is involved in protein degradation via the proteasome; Lys-63-linked is involved in endocytosis, and DNA-damage responses. Linear polymer chains formed via attachment by the initiator Met lead to cell signaling. Ubiquitin is usually conjugated to Lys residues of target proteins, however, in rare cases, conjugation to Cys or Ser residues has been observed. When polyubiquitin is free (unanchored-polyubiquitin), it also has distinct roles, such as in activation of protein kinases, and in signaling (By similarity).</text>
</comment>
<comment type="subcellular location">
    <subcellularLocation>
        <location evidence="1">Cytoplasm</location>
    </subcellularLocation>
    <subcellularLocation>
        <location evidence="1">Nucleus</location>
    </subcellularLocation>
</comment>
<comment type="miscellaneous">
    <text>Ubiquitin is encoded by 16 different genes. Ubiquitin is generally synthesized as a polyubiquitin precursor with tandem head to tail repeats. Often, there is one to three additional amino acids after the last repeat, removed in the mature protein. Alternatively, ubiquitin extension protein is synthesized as a single copy of ubiquitin fused to a ribosomal protein (either eL40 or eS31) or to a ubiquitin-related protein (either RUB1 or RUB2). Following translation, extension protein is cleaved from ubiquitin.</text>
</comment>
<comment type="similarity">
    <text evidence="3">Belongs to the ubiquitin family.</text>
</comment>
<organism>
    <name type="scientific">Arabidopsis thaliana</name>
    <name type="common">Mouse-ear cress</name>
    <dbReference type="NCBI Taxonomy" id="3702"/>
    <lineage>
        <taxon>Eukaryota</taxon>
        <taxon>Viridiplantae</taxon>
        <taxon>Streptophyta</taxon>
        <taxon>Embryophyta</taxon>
        <taxon>Tracheophyta</taxon>
        <taxon>Spermatophyta</taxon>
        <taxon>Magnoliopsida</taxon>
        <taxon>eudicotyledons</taxon>
        <taxon>Gunneridae</taxon>
        <taxon>Pentapetalae</taxon>
        <taxon>rosids</taxon>
        <taxon>malvids</taxon>
        <taxon>Brassicales</taxon>
        <taxon>Brassicaceae</taxon>
        <taxon>Camelineae</taxon>
        <taxon>Arabidopsis</taxon>
    </lineage>
</organism>
<gene>
    <name type="primary">UBQ12</name>
    <name type="ordered locus">At1g55060</name>
    <name type="ORF">T7N22.10</name>
</gene>
<evidence type="ECO:0000250" key="1"/>
<evidence type="ECO:0000255" key="2">
    <source>
        <dbReference type="PROSITE-ProRule" id="PRU00214"/>
    </source>
</evidence>
<evidence type="ECO:0000305" key="3"/>
<feature type="chain" id="PRO_0000396929" description="Ubiquitin-related 1">
    <location>
        <begin position="1"/>
        <end position="76"/>
    </location>
</feature>
<feature type="chain" id="PRO_0000396930" description="Ubiquitin-related 2">
    <location>
        <begin position="77"/>
        <end position="152"/>
    </location>
</feature>
<feature type="chain" id="PRO_0000396931" description="Ubiquitin-related 3">
    <location>
        <begin position="153"/>
        <end position="228"/>
    </location>
</feature>
<feature type="propeptide" id="PRO_0000396932" evidence="3">
    <location>
        <begin position="229"/>
        <end position="230"/>
    </location>
</feature>
<feature type="domain" description="Ubiquitin-like 1" evidence="2">
    <location>
        <begin position="1"/>
        <end position="76"/>
    </location>
</feature>
<feature type="domain" description="Ubiquitin-like 2" evidence="2">
    <location>
        <begin position="77"/>
        <end position="152"/>
    </location>
</feature>
<feature type="domain" description="Ubiquitin-like 3" evidence="2">
    <location>
        <begin position="153"/>
        <end position="228"/>
    </location>
</feature>
<feature type="cross-link" description="Glycyl lysine isopeptide (Gly-Lys) (interchain with K-? in acceptor proteins)" evidence="2">
    <location>
        <position position="76"/>
    </location>
</feature>
<feature type="cross-link" description="Glycyl lysine isopeptide (Gly-Lys) (interchain with K-? in acceptor proteins)" evidence="2">
    <location>
        <position position="152"/>
    </location>
</feature>
<feature type="cross-link" description="Glycyl lysine isopeptide (Gly-Lys) (interchain with K-? in acceptor proteins)" evidence="2">
    <location>
        <position position="228"/>
    </location>
</feature>
<proteinExistence type="inferred from homology"/>
<name>UBQ12_ARATH</name>
<dbReference type="EMBL" id="AC073944">
    <property type="status" value="NOT_ANNOTATED_CDS"/>
    <property type="molecule type" value="Genomic_DNA"/>
</dbReference>
<dbReference type="EMBL" id="CP002684">
    <property type="protein sequence ID" value="AEE33181.1"/>
    <property type="molecule type" value="Genomic_DNA"/>
</dbReference>
<dbReference type="RefSeq" id="NP_564675.1">
    <property type="nucleotide sequence ID" value="NM_104380.1"/>
</dbReference>
<dbReference type="SMR" id="Q3E7K8"/>
<dbReference type="STRING" id="3702.Q3E7K8"/>
<dbReference type="iPTMnet" id="Q3E7K8"/>
<dbReference type="PaxDb" id="3702-AT1G55060.1"/>
<dbReference type="ProteomicsDB" id="233026"/>
<dbReference type="EnsemblPlants" id="AT1G55060.1">
    <property type="protein sequence ID" value="AT1G55060.1"/>
    <property type="gene ID" value="AT1G55060"/>
</dbReference>
<dbReference type="GeneID" id="841949"/>
<dbReference type="Gramene" id="AT1G55060.1">
    <property type="protein sequence ID" value="AT1G55060.1"/>
    <property type="gene ID" value="AT1G55060"/>
</dbReference>
<dbReference type="KEGG" id="ath:AT1G55060"/>
<dbReference type="Araport" id="AT1G55060"/>
<dbReference type="TAIR" id="AT1G55060">
    <property type="gene designation" value="UBQ12"/>
</dbReference>
<dbReference type="eggNOG" id="KOG0001">
    <property type="taxonomic scope" value="Eukaryota"/>
</dbReference>
<dbReference type="HOGENOM" id="CLU_010412_0_0_1"/>
<dbReference type="InParanoid" id="Q3E7K8"/>
<dbReference type="OMA" id="FAGKQHE"/>
<dbReference type="PhylomeDB" id="Q3E7K8"/>
<dbReference type="PRO" id="PR:Q3E7K8"/>
<dbReference type="Proteomes" id="UP000006548">
    <property type="component" value="Chromosome 1"/>
</dbReference>
<dbReference type="ExpressionAtlas" id="Q3E7K8">
    <property type="expression patterns" value="baseline and differential"/>
</dbReference>
<dbReference type="GO" id="GO:0005737">
    <property type="term" value="C:cytoplasm"/>
    <property type="evidence" value="ECO:0007669"/>
    <property type="project" value="UniProtKB-SubCell"/>
</dbReference>
<dbReference type="GO" id="GO:0005634">
    <property type="term" value="C:nucleus"/>
    <property type="evidence" value="ECO:0007005"/>
    <property type="project" value="TAIR"/>
</dbReference>
<dbReference type="GO" id="GO:0003729">
    <property type="term" value="F:mRNA binding"/>
    <property type="evidence" value="ECO:0000314"/>
    <property type="project" value="TAIR"/>
</dbReference>
<dbReference type="GO" id="GO:0006511">
    <property type="term" value="P:ubiquitin-dependent protein catabolic process"/>
    <property type="evidence" value="ECO:0000250"/>
    <property type="project" value="TAIR"/>
</dbReference>
<dbReference type="CDD" id="cd01803">
    <property type="entry name" value="Ubl_ubiquitin"/>
    <property type="match status" value="2"/>
</dbReference>
<dbReference type="FunFam" id="3.10.20.90:FF:000005">
    <property type="entry name" value="Polyubiquitin 11"/>
    <property type="match status" value="1"/>
</dbReference>
<dbReference type="FunFam" id="3.10.20.90:FF:000016">
    <property type="entry name" value="Polyubiquitin 3"/>
    <property type="match status" value="1"/>
</dbReference>
<dbReference type="FunFam" id="3.10.20.90:FF:000011">
    <property type="entry name" value="Polyubiquitin Ubiquitin"/>
    <property type="match status" value="1"/>
</dbReference>
<dbReference type="Gene3D" id="3.10.20.90">
    <property type="entry name" value="Phosphatidylinositol 3-kinase Catalytic Subunit, Chain A, domain 1"/>
    <property type="match status" value="3"/>
</dbReference>
<dbReference type="InterPro" id="IPR000626">
    <property type="entry name" value="Ubiquitin-like_dom"/>
</dbReference>
<dbReference type="InterPro" id="IPR029071">
    <property type="entry name" value="Ubiquitin-like_domsf"/>
</dbReference>
<dbReference type="InterPro" id="IPR019954">
    <property type="entry name" value="Ubiquitin_CS"/>
</dbReference>
<dbReference type="InterPro" id="IPR019956">
    <property type="entry name" value="Ubiquitin_dom"/>
</dbReference>
<dbReference type="InterPro" id="IPR050158">
    <property type="entry name" value="Ubiquitin_ubiquitin-like"/>
</dbReference>
<dbReference type="PANTHER" id="PTHR10666">
    <property type="entry name" value="UBIQUITIN"/>
    <property type="match status" value="1"/>
</dbReference>
<dbReference type="Pfam" id="PF00240">
    <property type="entry name" value="ubiquitin"/>
    <property type="match status" value="3"/>
</dbReference>
<dbReference type="PRINTS" id="PR00348">
    <property type="entry name" value="UBIQUITIN"/>
</dbReference>
<dbReference type="SMART" id="SM00213">
    <property type="entry name" value="UBQ"/>
    <property type="match status" value="3"/>
</dbReference>
<dbReference type="SUPFAM" id="SSF54236">
    <property type="entry name" value="Ubiquitin-like"/>
    <property type="match status" value="3"/>
</dbReference>
<dbReference type="PROSITE" id="PS00299">
    <property type="entry name" value="UBIQUITIN_1"/>
    <property type="match status" value="1"/>
</dbReference>
<dbReference type="PROSITE" id="PS50053">
    <property type="entry name" value="UBIQUITIN_2"/>
    <property type="match status" value="3"/>
</dbReference>
<protein>
    <recommendedName>
        <fullName>Polyubiquitin 12</fullName>
    </recommendedName>
    <component>
        <recommendedName>
            <fullName>Ubiquitin-related 1</fullName>
        </recommendedName>
    </component>
    <component>
        <recommendedName>
            <fullName>Ubiquitin-related 2</fullName>
        </recommendedName>
    </component>
    <component>
        <recommendedName>
            <fullName>Ubiquitin-related 3</fullName>
        </recommendedName>
    </component>
</protein>